<proteinExistence type="inferred from homology"/>
<protein>
    <recommendedName>
        <fullName evidence="1">DNA-directed RNA polymerase subunit gamma</fullName>
        <shortName evidence="1">RNAP subunit gamma</shortName>
        <ecNumber evidence="1">2.7.7.6</ecNumber>
    </recommendedName>
    <alternativeName>
        <fullName evidence="1">RNA polymerase subunit gamma</fullName>
    </alternativeName>
    <alternativeName>
        <fullName evidence="1">Transcriptase subunit gamma</fullName>
    </alternativeName>
</protein>
<dbReference type="EC" id="2.7.7.6" evidence="1"/>
<dbReference type="EMBL" id="CP000111">
    <property type="protein sequence ID" value="ABB50637.1"/>
    <property type="molecule type" value="Genomic_DNA"/>
</dbReference>
<dbReference type="RefSeq" id="WP_011377119.1">
    <property type="nucleotide sequence ID" value="NC_007577.1"/>
</dbReference>
<dbReference type="SMR" id="Q318Q8"/>
<dbReference type="STRING" id="74546.PMT9312_1577"/>
<dbReference type="KEGG" id="pmi:PMT9312_1577"/>
<dbReference type="eggNOG" id="COG0086">
    <property type="taxonomic scope" value="Bacteria"/>
</dbReference>
<dbReference type="HOGENOM" id="CLU_030022_2_0_3"/>
<dbReference type="OrthoDB" id="9815296at2"/>
<dbReference type="Proteomes" id="UP000002715">
    <property type="component" value="Chromosome"/>
</dbReference>
<dbReference type="GO" id="GO:0000428">
    <property type="term" value="C:DNA-directed RNA polymerase complex"/>
    <property type="evidence" value="ECO:0007669"/>
    <property type="project" value="UniProtKB-KW"/>
</dbReference>
<dbReference type="GO" id="GO:0003677">
    <property type="term" value="F:DNA binding"/>
    <property type="evidence" value="ECO:0007669"/>
    <property type="project" value="UniProtKB-UniRule"/>
</dbReference>
<dbReference type="GO" id="GO:0003899">
    <property type="term" value="F:DNA-directed RNA polymerase activity"/>
    <property type="evidence" value="ECO:0007669"/>
    <property type="project" value="UniProtKB-UniRule"/>
</dbReference>
<dbReference type="GO" id="GO:0000287">
    <property type="term" value="F:magnesium ion binding"/>
    <property type="evidence" value="ECO:0007669"/>
    <property type="project" value="UniProtKB-UniRule"/>
</dbReference>
<dbReference type="GO" id="GO:0008270">
    <property type="term" value="F:zinc ion binding"/>
    <property type="evidence" value="ECO:0007669"/>
    <property type="project" value="UniProtKB-UniRule"/>
</dbReference>
<dbReference type="GO" id="GO:0006351">
    <property type="term" value="P:DNA-templated transcription"/>
    <property type="evidence" value="ECO:0007669"/>
    <property type="project" value="UniProtKB-UniRule"/>
</dbReference>
<dbReference type="Gene3D" id="1.10.40.90">
    <property type="match status" value="1"/>
</dbReference>
<dbReference type="Gene3D" id="2.40.40.20">
    <property type="match status" value="1"/>
</dbReference>
<dbReference type="Gene3D" id="4.10.860.120">
    <property type="entry name" value="RNA polymerase II, clamp domain"/>
    <property type="match status" value="1"/>
</dbReference>
<dbReference type="Gene3D" id="1.10.274.100">
    <property type="entry name" value="RNA polymerase Rpb1, domain 3"/>
    <property type="match status" value="1"/>
</dbReference>
<dbReference type="HAMAP" id="MF_01323">
    <property type="entry name" value="RNApol_bact_RpoC1"/>
    <property type="match status" value="1"/>
</dbReference>
<dbReference type="InterPro" id="IPR012755">
    <property type="entry name" value="DNA-dir_RpoC1_gamma"/>
</dbReference>
<dbReference type="InterPro" id="IPR045867">
    <property type="entry name" value="DNA-dir_RpoC_beta_prime"/>
</dbReference>
<dbReference type="InterPro" id="IPR000722">
    <property type="entry name" value="RNA_pol_asu"/>
</dbReference>
<dbReference type="InterPro" id="IPR006592">
    <property type="entry name" value="RNA_pol_N"/>
</dbReference>
<dbReference type="InterPro" id="IPR007080">
    <property type="entry name" value="RNA_pol_Rpb1_1"/>
</dbReference>
<dbReference type="InterPro" id="IPR007066">
    <property type="entry name" value="RNA_pol_Rpb1_3"/>
</dbReference>
<dbReference type="InterPro" id="IPR042102">
    <property type="entry name" value="RNA_pol_Rpb1_3_sf"/>
</dbReference>
<dbReference type="InterPro" id="IPR044893">
    <property type="entry name" value="RNA_pol_Rpb1_clamp_domain"/>
</dbReference>
<dbReference type="InterPro" id="IPR034678">
    <property type="entry name" value="RNApol_RpoC1"/>
</dbReference>
<dbReference type="NCBIfam" id="NF002729">
    <property type="entry name" value="PRK02625.1"/>
    <property type="match status" value="1"/>
</dbReference>
<dbReference type="NCBIfam" id="TIGR02387">
    <property type="entry name" value="rpoC1_cyan"/>
    <property type="match status" value="1"/>
</dbReference>
<dbReference type="PANTHER" id="PTHR19376">
    <property type="entry name" value="DNA-DIRECTED RNA POLYMERASE"/>
    <property type="match status" value="1"/>
</dbReference>
<dbReference type="PANTHER" id="PTHR19376:SF54">
    <property type="entry name" value="DNA-DIRECTED RNA POLYMERASE SUBUNIT BETA"/>
    <property type="match status" value="1"/>
</dbReference>
<dbReference type="Pfam" id="PF04997">
    <property type="entry name" value="RNA_pol_Rpb1_1"/>
    <property type="match status" value="1"/>
</dbReference>
<dbReference type="Pfam" id="PF00623">
    <property type="entry name" value="RNA_pol_Rpb1_2"/>
    <property type="match status" value="1"/>
</dbReference>
<dbReference type="Pfam" id="PF04983">
    <property type="entry name" value="RNA_pol_Rpb1_3"/>
    <property type="match status" value="1"/>
</dbReference>
<dbReference type="SMART" id="SM00663">
    <property type="entry name" value="RPOLA_N"/>
    <property type="match status" value="1"/>
</dbReference>
<dbReference type="SUPFAM" id="SSF64484">
    <property type="entry name" value="beta and beta-prime subunits of DNA dependent RNA-polymerase"/>
    <property type="match status" value="1"/>
</dbReference>
<accession>Q318Q8</accession>
<evidence type="ECO:0000255" key="1">
    <source>
        <dbReference type="HAMAP-Rule" id="MF_01323"/>
    </source>
</evidence>
<name>RPOC1_PROM9</name>
<sequence>MTNSNLRTENHFDYVKISIASPQRIMDWGQRTLPNGQVVGEVTKPETINYRTLKPEMDGLFCEKIFGPSKDWECHCGKYKRVRHRGIVCERCGVEVTESRVRRHRMGYIKLAAPVSHVWYLKGIPSYVAILLDIPLRDVEQIVYFNCYVVLDPGDHKELKYKQLLTEDEWLEIEDEIYAEDSTIENEPFVGIGAEALKQLLEDLDLNQIAEELREEITQSKGQKRAKLIKRIRVIDNFIATNAKPEWMVLDAIPVIPPDLRPMVQLDGGRFATSDLNDLYRRVINRNNRLARLQEILAPEIIVRNEKRMLQEAVDALIDNGRRGRTVVGANNRALKSLSDIIEGKQGRFRQNLLGKRVDYSGRSVIVVGPKLKMHQCGLPKEMAIELFQPFVIHRLIRQNIVNNIKAAKKLIQKADDEVMQVLQEVIEGHPILLNRAPTLHRLGIQAFEPKLVGGRAIQLHPLVCPAFNADFDGDQMAVHVPLALESQTEARMLMLASNNILSPATGEPIVTPSQDMVLGSYYLTALQPNYQKPDFGDNKSTFASLEDVIFAFEDKRLSLHEWVWVRFNGEVEDEDEMSKPQKIEELEDGSRLEMWKLRRDRFDSQNNLISRFVLTTVGRVVMNYTIIDSVSKT</sequence>
<reference key="1">
    <citation type="journal article" date="2006" name="Science">
        <title>Genomic islands and the ecology and evolution of Prochlorococcus.</title>
        <authorList>
            <person name="Coleman M.L."/>
            <person name="Sullivan M.B."/>
            <person name="Martiny A.C."/>
            <person name="Steglich C."/>
            <person name="Barry K."/>
            <person name="Delong E.F."/>
            <person name="Chisholm S.W."/>
        </authorList>
    </citation>
    <scope>NUCLEOTIDE SEQUENCE [LARGE SCALE GENOMIC DNA]</scope>
    <source>
        <strain>MIT 9312</strain>
    </source>
</reference>
<keyword id="KW-0240">DNA-directed RNA polymerase</keyword>
<keyword id="KW-0460">Magnesium</keyword>
<keyword id="KW-0479">Metal-binding</keyword>
<keyword id="KW-0548">Nucleotidyltransferase</keyword>
<keyword id="KW-0804">Transcription</keyword>
<keyword id="KW-0808">Transferase</keyword>
<keyword id="KW-0862">Zinc</keyword>
<comment type="function">
    <text evidence="1">DNA-dependent RNA polymerase catalyzes the transcription of DNA into RNA using the four ribonucleoside triphosphates as substrates.</text>
</comment>
<comment type="catalytic activity">
    <reaction evidence="1">
        <text>RNA(n) + a ribonucleoside 5'-triphosphate = RNA(n+1) + diphosphate</text>
        <dbReference type="Rhea" id="RHEA:21248"/>
        <dbReference type="Rhea" id="RHEA-COMP:14527"/>
        <dbReference type="Rhea" id="RHEA-COMP:17342"/>
        <dbReference type="ChEBI" id="CHEBI:33019"/>
        <dbReference type="ChEBI" id="CHEBI:61557"/>
        <dbReference type="ChEBI" id="CHEBI:140395"/>
        <dbReference type="EC" id="2.7.7.6"/>
    </reaction>
</comment>
<comment type="cofactor">
    <cofactor evidence="1">
        <name>Mg(2+)</name>
        <dbReference type="ChEBI" id="CHEBI:18420"/>
    </cofactor>
    <text evidence="1">Binds 1 Mg(2+) ion per subunit.</text>
</comment>
<comment type="cofactor">
    <cofactor evidence="1">
        <name>Zn(2+)</name>
        <dbReference type="ChEBI" id="CHEBI:29105"/>
    </cofactor>
    <text evidence="1">Binds 1 Zn(2+) ion per subunit.</text>
</comment>
<comment type="subunit">
    <text evidence="1">In cyanobacteria the RNAP catalytic core is composed of 2 alpha, 1 beta, 1 beta', 1 gamma and 1 omega subunit. When a sigma factor is associated with the core the holoenzyme is formed, which can initiate transcription.</text>
</comment>
<comment type="similarity">
    <text evidence="1">Belongs to the RNA polymerase beta' chain family. RpoC1 subfamily.</text>
</comment>
<feature type="chain" id="PRO_1000051993" description="DNA-directed RNA polymerase subunit gamma">
    <location>
        <begin position="1"/>
        <end position="634"/>
    </location>
</feature>
<feature type="binding site" evidence="1">
    <location>
        <position position="74"/>
    </location>
    <ligand>
        <name>Zn(2+)</name>
        <dbReference type="ChEBI" id="CHEBI:29105"/>
    </ligand>
</feature>
<feature type="binding site" evidence="1">
    <location>
        <position position="76"/>
    </location>
    <ligand>
        <name>Zn(2+)</name>
        <dbReference type="ChEBI" id="CHEBI:29105"/>
    </ligand>
</feature>
<feature type="binding site" evidence="1">
    <location>
        <position position="89"/>
    </location>
    <ligand>
        <name>Zn(2+)</name>
        <dbReference type="ChEBI" id="CHEBI:29105"/>
    </ligand>
</feature>
<feature type="binding site" evidence="1">
    <location>
        <position position="92"/>
    </location>
    <ligand>
        <name>Zn(2+)</name>
        <dbReference type="ChEBI" id="CHEBI:29105"/>
    </ligand>
</feature>
<feature type="binding site" evidence="1">
    <location>
        <position position="471"/>
    </location>
    <ligand>
        <name>Mg(2+)</name>
        <dbReference type="ChEBI" id="CHEBI:18420"/>
    </ligand>
</feature>
<feature type="binding site" evidence="1">
    <location>
        <position position="473"/>
    </location>
    <ligand>
        <name>Mg(2+)</name>
        <dbReference type="ChEBI" id="CHEBI:18420"/>
    </ligand>
</feature>
<feature type="binding site" evidence="1">
    <location>
        <position position="475"/>
    </location>
    <ligand>
        <name>Mg(2+)</name>
        <dbReference type="ChEBI" id="CHEBI:18420"/>
    </ligand>
</feature>
<gene>
    <name evidence="1" type="primary">rpoC1</name>
    <name type="ordered locus">PMT9312_1577</name>
</gene>
<organism>
    <name type="scientific">Prochlorococcus marinus (strain MIT 9312)</name>
    <dbReference type="NCBI Taxonomy" id="74546"/>
    <lineage>
        <taxon>Bacteria</taxon>
        <taxon>Bacillati</taxon>
        <taxon>Cyanobacteriota</taxon>
        <taxon>Cyanophyceae</taxon>
        <taxon>Synechococcales</taxon>
        <taxon>Prochlorococcaceae</taxon>
        <taxon>Prochlorococcus</taxon>
    </lineage>
</organism>